<sequence>MIARIWSGESSLWRLLLPLSWLYGLVSGAIRLSYKLGLKRAWRAPVPVVVVGNLTAGGNGKTPVVIWLVEKLQQRGVRVGVVSRGYGGKAAAYPLLLTPETTTAEAGDEPVLIYQRTGAPVAVAPERAAAVKAILAAHNVQIIITDDGLQHYRLARDIEIVVIDGVRRFGNGWWLPAGPMRERASRLKTVDAAIVNGGVARAGEIPMQLAPGLAVNLRTGARCDVAQLSNIVAMAGIGHPPRFFATLEACGAHPQKCVPLADHQTLAPADVQALVGEGQTLVMTEKDAVKCRAFAEDNWWFLPVDARLSGEQPDKLLEHITSLVR</sequence>
<comment type="function">
    <text evidence="1">Transfers the gamma-phosphate of ATP to the 4'-position of a tetraacyldisaccharide 1-phosphate intermediate (termed DS-1-P) to form tetraacyldisaccharide 1,4'-bis-phosphate (lipid IVA).</text>
</comment>
<comment type="catalytic activity">
    <reaction evidence="1">
        <text>a lipid A disaccharide + ATP = a lipid IVA + ADP + H(+)</text>
        <dbReference type="Rhea" id="RHEA:67840"/>
        <dbReference type="ChEBI" id="CHEBI:15378"/>
        <dbReference type="ChEBI" id="CHEBI:30616"/>
        <dbReference type="ChEBI" id="CHEBI:176343"/>
        <dbReference type="ChEBI" id="CHEBI:176425"/>
        <dbReference type="ChEBI" id="CHEBI:456216"/>
        <dbReference type="EC" id="2.7.1.130"/>
    </reaction>
</comment>
<comment type="pathway">
    <text evidence="1">Glycolipid biosynthesis; lipid IV(A) biosynthesis; lipid IV(A) from (3R)-3-hydroxytetradecanoyl-[acyl-carrier-protein] and UDP-N-acetyl-alpha-D-glucosamine: step 6/6.</text>
</comment>
<comment type="similarity">
    <text evidence="1">Belongs to the LpxK family.</text>
</comment>
<dbReference type="EC" id="2.7.1.130" evidence="1"/>
<dbReference type="EMBL" id="FM200053">
    <property type="protein sequence ID" value="CAR59878.1"/>
    <property type="molecule type" value="Genomic_DNA"/>
</dbReference>
<dbReference type="RefSeq" id="WP_000561702.1">
    <property type="nucleotide sequence ID" value="NC_011147.1"/>
</dbReference>
<dbReference type="SMR" id="B5BBP3"/>
<dbReference type="KEGG" id="sek:SSPA1686"/>
<dbReference type="HOGENOM" id="CLU_038816_2_0_6"/>
<dbReference type="UniPathway" id="UPA00359">
    <property type="reaction ID" value="UER00482"/>
</dbReference>
<dbReference type="Proteomes" id="UP000001869">
    <property type="component" value="Chromosome"/>
</dbReference>
<dbReference type="GO" id="GO:0005886">
    <property type="term" value="C:plasma membrane"/>
    <property type="evidence" value="ECO:0007669"/>
    <property type="project" value="TreeGrafter"/>
</dbReference>
<dbReference type="GO" id="GO:0005524">
    <property type="term" value="F:ATP binding"/>
    <property type="evidence" value="ECO:0007669"/>
    <property type="project" value="UniProtKB-UniRule"/>
</dbReference>
<dbReference type="GO" id="GO:0009029">
    <property type="term" value="F:tetraacyldisaccharide 4'-kinase activity"/>
    <property type="evidence" value="ECO:0007669"/>
    <property type="project" value="UniProtKB-UniRule"/>
</dbReference>
<dbReference type="GO" id="GO:0009245">
    <property type="term" value="P:lipid A biosynthetic process"/>
    <property type="evidence" value="ECO:0007669"/>
    <property type="project" value="UniProtKB-UniRule"/>
</dbReference>
<dbReference type="GO" id="GO:0009244">
    <property type="term" value="P:lipopolysaccharide core region biosynthetic process"/>
    <property type="evidence" value="ECO:0007669"/>
    <property type="project" value="TreeGrafter"/>
</dbReference>
<dbReference type="HAMAP" id="MF_00409">
    <property type="entry name" value="LpxK"/>
    <property type="match status" value="1"/>
</dbReference>
<dbReference type="InterPro" id="IPR003758">
    <property type="entry name" value="LpxK"/>
</dbReference>
<dbReference type="InterPro" id="IPR027417">
    <property type="entry name" value="P-loop_NTPase"/>
</dbReference>
<dbReference type="NCBIfam" id="TIGR00682">
    <property type="entry name" value="lpxK"/>
    <property type="match status" value="1"/>
</dbReference>
<dbReference type="PANTHER" id="PTHR42724">
    <property type="entry name" value="TETRAACYLDISACCHARIDE 4'-KINASE"/>
    <property type="match status" value="1"/>
</dbReference>
<dbReference type="PANTHER" id="PTHR42724:SF1">
    <property type="entry name" value="TETRAACYLDISACCHARIDE 4'-KINASE, MITOCHONDRIAL-RELATED"/>
    <property type="match status" value="1"/>
</dbReference>
<dbReference type="Pfam" id="PF02606">
    <property type="entry name" value="LpxK"/>
    <property type="match status" value="1"/>
</dbReference>
<dbReference type="SUPFAM" id="SSF52540">
    <property type="entry name" value="P-loop containing nucleoside triphosphate hydrolases"/>
    <property type="match status" value="1"/>
</dbReference>
<keyword id="KW-0067">ATP-binding</keyword>
<keyword id="KW-0418">Kinase</keyword>
<keyword id="KW-0441">Lipid A biosynthesis</keyword>
<keyword id="KW-0444">Lipid biosynthesis</keyword>
<keyword id="KW-0443">Lipid metabolism</keyword>
<keyword id="KW-0547">Nucleotide-binding</keyword>
<keyword id="KW-0808">Transferase</keyword>
<evidence type="ECO:0000255" key="1">
    <source>
        <dbReference type="HAMAP-Rule" id="MF_00409"/>
    </source>
</evidence>
<protein>
    <recommendedName>
        <fullName evidence="1">Tetraacyldisaccharide 4'-kinase</fullName>
        <ecNumber evidence="1">2.7.1.130</ecNumber>
    </recommendedName>
    <alternativeName>
        <fullName evidence="1">Lipid A 4'-kinase</fullName>
    </alternativeName>
</protein>
<gene>
    <name evidence="1" type="primary">lpxK</name>
    <name type="ordered locus">SSPA1686</name>
</gene>
<name>LPXK_SALPK</name>
<reference key="1">
    <citation type="journal article" date="2009" name="BMC Genomics">
        <title>Pseudogene accumulation in the evolutionary histories of Salmonella enterica serovars Paratyphi A and Typhi.</title>
        <authorList>
            <person name="Holt K.E."/>
            <person name="Thomson N.R."/>
            <person name="Wain J."/>
            <person name="Langridge G.C."/>
            <person name="Hasan R."/>
            <person name="Bhutta Z.A."/>
            <person name="Quail M.A."/>
            <person name="Norbertczak H."/>
            <person name="Walker D."/>
            <person name="Simmonds M."/>
            <person name="White B."/>
            <person name="Bason N."/>
            <person name="Mungall K."/>
            <person name="Dougan G."/>
            <person name="Parkhill J."/>
        </authorList>
    </citation>
    <scope>NUCLEOTIDE SEQUENCE [LARGE SCALE GENOMIC DNA]</scope>
    <source>
        <strain>AKU_12601</strain>
    </source>
</reference>
<accession>B5BBP3</accession>
<feature type="chain" id="PRO_1000123743" description="Tetraacyldisaccharide 4'-kinase">
    <location>
        <begin position="1"/>
        <end position="325"/>
    </location>
</feature>
<feature type="binding site" evidence="1">
    <location>
        <begin position="55"/>
        <end position="62"/>
    </location>
    <ligand>
        <name>ATP</name>
        <dbReference type="ChEBI" id="CHEBI:30616"/>
    </ligand>
</feature>
<organism>
    <name type="scientific">Salmonella paratyphi A (strain AKU_12601)</name>
    <dbReference type="NCBI Taxonomy" id="554290"/>
    <lineage>
        <taxon>Bacteria</taxon>
        <taxon>Pseudomonadati</taxon>
        <taxon>Pseudomonadota</taxon>
        <taxon>Gammaproteobacteria</taxon>
        <taxon>Enterobacterales</taxon>
        <taxon>Enterobacteriaceae</taxon>
        <taxon>Salmonella</taxon>
    </lineage>
</organism>
<proteinExistence type="inferred from homology"/>